<gene>
    <name type="primary">sodC1</name>
    <name type="synonym">sodC</name>
    <name type="ordered locus">STM1044</name>
</gene>
<feature type="signal peptide" evidence="2">
    <location>
        <begin position="1"/>
        <end position="20"/>
    </location>
</feature>
<feature type="chain" id="PRO_0000032826" description="Superoxide dismutase [Cu-Zn] 1">
    <location>
        <begin position="21"/>
        <end position="177"/>
    </location>
</feature>
<feature type="binding site">
    <location>
        <position position="69"/>
    </location>
    <ligand>
        <name>Cu cation</name>
        <dbReference type="ChEBI" id="CHEBI:23378"/>
        <note>catalytic</note>
    </ligand>
</feature>
<feature type="binding site">
    <location>
        <position position="71"/>
    </location>
    <ligand>
        <name>Cu cation</name>
        <dbReference type="ChEBI" id="CHEBI:23378"/>
        <note>catalytic</note>
    </ligand>
</feature>
<feature type="binding site">
    <location>
        <position position="94"/>
    </location>
    <ligand>
        <name>Cu cation</name>
        <dbReference type="ChEBI" id="CHEBI:23378"/>
        <note>catalytic</note>
    </ligand>
</feature>
<feature type="binding site">
    <location>
        <position position="94"/>
    </location>
    <ligand>
        <name>Zn(2+)</name>
        <dbReference type="ChEBI" id="CHEBI:29105"/>
        <note>structural</note>
    </ligand>
</feature>
<feature type="binding site">
    <location>
        <position position="103"/>
    </location>
    <ligand>
        <name>Zn(2+)</name>
        <dbReference type="ChEBI" id="CHEBI:29105"/>
        <note>structural</note>
    </ligand>
</feature>
<feature type="binding site">
    <location>
        <position position="112"/>
    </location>
    <ligand>
        <name>Zn(2+)</name>
        <dbReference type="ChEBI" id="CHEBI:29105"/>
        <note>structural</note>
    </ligand>
</feature>
<feature type="binding site">
    <location>
        <position position="115"/>
    </location>
    <ligand>
        <name>Zn(2+)</name>
        <dbReference type="ChEBI" id="CHEBI:29105"/>
        <note>structural</note>
    </ligand>
</feature>
<feature type="binding site">
    <location>
        <position position="150"/>
    </location>
    <ligand>
        <name>Cu cation</name>
        <dbReference type="ChEBI" id="CHEBI:23378"/>
        <note>catalytic</note>
    </ligand>
</feature>
<feature type="disulfide bond">
    <location>
        <begin position="76"/>
        <end position="172"/>
    </location>
</feature>
<feature type="sequence conflict" description="In Ref. 2; AAB62385." evidence="3" ref="2">
    <original>P</original>
    <variation>T</variation>
    <location>
        <position position="49"/>
    </location>
</feature>
<feature type="sequence conflict" description="In Ref. 2; AAB62385." evidence="3" ref="2">
    <original>M</original>
    <variation>T</variation>
    <location>
        <position position="148"/>
    </location>
</feature>
<feature type="strand" evidence="4">
    <location>
        <begin position="23"/>
        <end position="31"/>
    </location>
</feature>
<feature type="strand" evidence="4">
    <location>
        <begin position="33"/>
        <end position="48"/>
    </location>
</feature>
<feature type="strand" evidence="4">
    <location>
        <begin position="51"/>
        <end position="58"/>
    </location>
</feature>
<feature type="strand" evidence="4">
    <location>
        <begin position="63"/>
        <end position="66"/>
    </location>
</feature>
<feature type="strand" evidence="4">
    <location>
        <begin position="68"/>
        <end position="74"/>
    </location>
</feature>
<feature type="strand" evidence="4">
    <location>
        <begin position="79"/>
        <end position="81"/>
    </location>
</feature>
<feature type="strand" evidence="4">
    <location>
        <begin position="84"/>
        <end position="86"/>
    </location>
</feature>
<feature type="helix" evidence="4">
    <location>
        <begin position="89"/>
        <end position="91"/>
    </location>
</feature>
<feature type="strand" evidence="4">
    <location>
        <begin position="119"/>
        <end position="121"/>
    </location>
</feature>
<feature type="strand" evidence="4">
    <location>
        <begin position="131"/>
        <end position="133"/>
    </location>
</feature>
<feature type="helix" evidence="4">
    <location>
        <begin position="139"/>
        <end position="142"/>
    </location>
</feature>
<feature type="strand" evidence="4">
    <location>
        <begin position="146"/>
        <end position="152"/>
    </location>
</feature>
<feature type="strand" evidence="4">
    <location>
        <begin position="156"/>
        <end position="161"/>
    </location>
</feature>
<feature type="helix" evidence="4">
    <location>
        <begin position="162"/>
        <end position="165"/>
    </location>
</feature>
<feature type="strand" evidence="4">
    <location>
        <begin position="168"/>
        <end position="174"/>
    </location>
</feature>
<accession>P0CW86</accession>
<accession>O33803</accession>
<accession>O50545</accession>
<accession>P53636</accession>
<name>SODC1_SALTY</name>
<keyword id="KW-0002">3D-structure</keyword>
<keyword id="KW-0049">Antioxidant</keyword>
<keyword id="KW-0186">Copper</keyword>
<keyword id="KW-1015">Disulfide bond</keyword>
<keyword id="KW-0479">Metal-binding</keyword>
<keyword id="KW-0560">Oxidoreductase</keyword>
<keyword id="KW-0574">Periplasm</keyword>
<keyword id="KW-1185">Reference proteome</keyword>
<keyword id="KW-0732">Signal</keyword>
<keyword id="KW-0862">Zinc</keyword>
<evidence type="ECO:0000250" key="1"/>
<evidence type="ECO:0000255" key="2"/>
<evidence type="ECO:0000305" key="3"/>
<evidence type="ECO:0007829" key="4">
    <source>
        <dbReference type="PDB" id="6VBS"/>
    </source>
</evidence>
<comment type="function">
    <text>Destroys radicals which are normally produced within the cells and which are toxic to biological systems.</text>
</comment>
<comment type="catalytic activity">
    <reaction>
        <text>2 superoxide + 2 H(+) = H2O2 + O2</text>
        <dbReference type="Rhea" id="RHEA:20696"/>
        <dbReference type="ChEBI" id="CHEBI:15378"/>
        <dbReference type="ChEBI" id="CHEBI:15379"/>
        <dbReference type="ChEBI" id="CHEBI:16240"/>
        <dbReference type="ChEBI" id="CHEBI:18421"/>
        <dbReference type="EC" id="1.15.1.1"/>
    </reaction>
</comment>
<comment type="cofactor">
    <cofactor>
        <name>Cu cation</name>
        <dbReference type="ChEBI" id="CHEBI:23378"/>
    </cofactor>
    <text>Binds 1 copper ion per subunit.</text>
</comment>
<comment type="cofactor">
    <cofactor>
        <name>Zn(2+)</name>
        <dbReference type="ChEBI" id="CHEBI:29105"/>
    </cofactor>
    <text>Binds 1 zinc ion per subunit.</text>
</comment>
<comment type="subunit">
    <text evidence="1">Monomer.</text>
</comment>
<comment type="interaction">
    <interactant intactId="EBI-6399836">
        <id>P0CW86</id>
    </interactant>
    <interactant intactId="EBI-6399836">
        <id>P0CW86</id>
        <label>sodC1</label>
    </interactant>
    <organismsDiffer>false</organismsDiffer>
    <experiments>2</experiments>
</comment>
<comment type="subcellular location">
    <subcellularLocation>
        <location>Periplasm</location>
    </subcellularLocation>
</comment>
<comment type="miscellaneous">
    <text>Encoded by a cryptic bacteriophage.</text>
</comment>
<comment type="similarity">
    <text evidence="3">Belongs to the Cu-Zn superoxide dismutase family.</text>
</comment>
<proteinExistence type="evidence at protein level"/>
<dbReference type="EC" id="1.15.1.1"/>
<dbReference type="EMBL" id="AF007380">
    <property type="protein sequence ID" value="AAB62385.1"/>
    <property type="molecule type" value="Genomic_DNA"/>
</dbReference>
<dbReference type="EMBL" id="AE006468">
    <property type="protein sequence ID" value="AAL19978.1"/>
    <property type="molecule type" value="Genomic_DNA"/>
</dbReference>
<dbReference type="RefSeq" id="WP_000877926.1">
    <property type="nucleotide sequence ID" value="NC_003197.2"/>
</dbReference>
<dbReference type="PDB" id="1EQW">
    <property type="method" value="X-ray"/>
    <property type="resolution" value="2.30 A"/>
    <property type="chains" value="A/B/C/D=22-177"/>
</dbReference>
<dbReference type="PDB" id="6VBS">
    <property type="method" value="X-ray"/>
    <property type="resolution" value="1.70 A"/>
    <property type="chains" value="A/B/C/D/E/F=21-177"/>
</dbReference>
<dbReference type="PDB" id="6VBT">
    <property type="method" value="X-ray"/>
    <property type="resolution" value="1.70 A"/>
    <property type="chains" value="A/B=21-177"/>
</dbReference>
<dbReference type="PDBsum" id="1EQW"/>
<dbReference type="PDBsum" id="6VBS"/>
<dbReference type="PDBsum" id="6VBT"/>
<dbReference type="SMR" id="P0CW86"/>
<dbReference type="STRING" id="99287.STM1044"/>
<dbReference type="PaxDb" id="99287-STM1044"/>
<dbReference type="PATRIC" id="fig|99287.12.peg.1105"/>
<dbReference type="HOGENOM" id="CLU_056632_7_1_6"/>
<dbReference type="OMA" id="HVNPSCD"/>
<dbReference type="PhylomeDB" id="P0CW86"/>
<dbReference type="BioCyc" id="SENT99287:STM1044-MONOMER"/>
<dbReference type="EvolutionaryTrace" id="P0CW86"/>
<dbReference type="PHI-base" id="PHI:11378"/>
<dbReference type="PHI-base" id="PHI:9808"/>
<dbReference type="Proteomes" id="UP000001014">
    <property type="component" value="Chromosome"/>
</dbReference>
<dbReference type="GO" id="GO:0042597">
    <property type="term" value="C:periplasmic space"/>
    <property type="evidence" value="ECO:0000318"/>
    <property type="project" value="GO_Central"/>
</dbReference>
<dbReference type="GO" id="GO:0005507">
    <property type="term" value="F:copper ion binding"/>
    <property type="evidence" value="ECO:0000318"/>
    <property type="project" value="GO_Central"/>
</dbReference>
<dbReference type="GO" id="GO:0042802">
    <property type="term" value="F:identical protein binding"/>
    <property type="evidence" value="ECO:0000353"/>
    <property type="project" value="IntAct"/>
</dbReference>
<dbReference type="GO" id="GO:0004784">
    <property type="term" value="F:superoxide dismutase activity"/>
    <property type="evidence" value="ECO:0000318"/>
    <property type="project" value="GO_Central"/>
</dbReference>
<dbReference type="GO" id="GO:0019430">
    <property type="term" value="P:removal of superoxide radicals"/>
    <property type="evidence" value="ECO:0000318"/>
    <property type="project" value="GO_Central"/>
</dbReference>
<dbReference type="CDD" id="cd00305">
    <property type="entry name" value="Cu-Zn_Superoxide_Dismutase"/>
    <property type="match status" value="1"/>
</dbReference>
<dbReference type="FunFam" id="2.60.40.200:FF:000002">
    <property type="entry name" value="Superoxide dismutase [Cu-Zn]"/>
    <property type="match status" value="1"/>
</dbReference>
<dbReference type="Gene3D" id="2.60.40.200">
    <property type="entry name" value="Superoxide dismutase, copper/zinc binding domain"/>
    <property type="match status" value="1"/>
</dbReference>
<dbReference type="InterPro" id="IPR036423">
    <property type="entry name" value="SOD-like_Cu/Zn_dom_sf"/>
</dbReference>
<dbReference type="InterPro" id="IPR024134">
    <property type="entry name" value="SOD_Cu/Zn_/chaperone"/>
</dbReference>
<dbReference type="InterPro" id="IPR018152">
    <property type="entry name" value="SOD_Cu/Zn_BS"/>
</dbReference>
<dbReference type="InterPro" id="IPR001424">
    <property type="entry name" value="SOD_Cu_Zn_dom"/>
</dbReference>
<dbReference type="NCBIfam" id="NF007628">
    <property type="entry name" value="PRK10290.1"/>
    <property type="match status" value="1"/>
</dbReference>
<dbReference type="PANTHER" id="PTHR10003">
    <property type="entry name" value="SUPEROXIDE DISMUTASE CU-ZN -RELATED"/>
    <property type="match status" value="1"/>
</dbReference>
<dbReference type="Pfam" id="PF00080">
    <property type="entry name" value="Sod_Cu"/>
    <property type="match status" value="1"/>
</dbReference>
<dbReference type="SUPFAM" id="SSF49329">
    <property type="entry name" value="Cu,Zn superoxide dismutase-like"/>
    <property type="match status" value="1"/>
</dbReference>
<dbReference type="PROSITE" id="PS00332">
    <property type="entry name" value="SOD_CU_ZN_2"/>
    <property type="match status" value="1"/>
</dbReference>
<reference key="1">
    <citation type="journal article" date="1997" name="Proc. Natl. Acad. Sci. U.S.A.">
        <title>Periplasmic superoxide dismutase protects Salmonella from products of phagocyte NADPH-oxidase and nitric oxide synthase.</title>
        <authorList>
            <person name="De Groote M.A."/>
            <person name="Ochsner U.A."/>
            <person name="Shiloh M.U."/>
            <person name="Nathan C."/>
            <person name="McCord J.M."/>
            <person name="Dinauer M.C."/>
            <person name="Libby S.J."/>
            <person name="Vazquez-Torres A."/>
            <person name="Xu Y."/>
            <person name="Fang F.C."/>
        </authorList>
    </citation>
    <scope>NUCLEOTIDE SEQUENCE [GENOMIC DNA]</scope>
</reference>
<reference key="2">
    <citation type="journal article" date="2001" name="Nature">
        <title>Complete genome sequence of Salmonella enterica serovar Typhimurium LT2.</title>
        <authorList>
            <person name="McClelland M."/>
            <person name="Sanderson K.E."/>
            <person name="Spieth J."/>
            <person name="Clifton S.W."/>
            <person name="Latreille P."/>
            <person name="Courtney L."/>
            <person name="Porwollik S."/>
            <person name="Ali J."/>
            <person name="Dante M."/>
            <person name="Du F."/>
            <person name="Hou S."/>
            <person name="Layman D."/>
            <person name="Leonard S."/>
            <person name="Nguyen C."/>
            <person name="Scott K."/>
            <person name="Holmes A."/>
            <person name="Grewal N."/>
            <person name="Mulvaney E."/>
            <person name="Ryan E."/>
            <person name="Sun H."/>
            <person name="Florea L."/>
            <person name="Miller W."/>
            <person name="Stoneking T."/>
            <person name="Nhan M."/>
            <person name="Waterston R."/>
            <person name="Wilson R.K."/>
        </authorList>
    </citation>
    <scope>NUCLEOTIDE SEQUENCE [LARGE SCALE GENOMIC DNA]</scope>
    <source>
        <strain>LT2 / SGSC1412 / ATCC 700720</strain>
    </source>
</reference>
<reference key="3">
    <citation type="journal article" date="2000" name="J. Mol. Biol.">
        <title>Functional and crystallographic characterization of Salmonella typhimurium Cu,Zn superoxide dismutase coded by the sodCI virulence gene.</title>
        <authorList>
            <person name="Pesce A."/>
            <person name="Battistoni A."/>
            <person name="Stroppolo M.E."/>
            <person name="Polizio F."/>
            <person name="Nardini M."/>
            <person name="Kroll J.S."/>
            <person name="Langford P.R."/>
            <person name="O'Neill P."/>
            <person name="Sette M."/>
            <person name="Desideri A."/>
            <person name="Bolognesi M."/>
        </authorList>
    </citation>
    <scope>X-RAY CRYSTALLOGRAPHY (2.3 ANGSTROMS)</scope>
</reference>
<protein>
    <recommendedName>
        <fullName>Superoxide dismutase [Cu-Zn] 1</fullName>
        <ecNumber>1.15.1.1</ecNumber>
    </recommendedName>
    <alternativeName>
        <fullName>sodCI</fullName>
    </alternativeName>
</protein>
<sequence length="177" mass="18370">MKYTILSLVAGALISCSAMAENTLTVKMNDALSSGTGENIGEITVSETPYGLLFTPHLNGLTPGIHGFHVHTNPSCMPGMKDGKEVPALMAGGHLDPEKTGKHLGPYNDKGHLGDLPGLVVNADGTATYPLLAPRLKSLSELKGHSLMIHKGGDNYSDKPAPLGGGGARFACGVIEK</sequence>
<organism>
    <name type="scientific">Salmonella typhimurium (strain LT2 / SGSC1412 / ATCC 700720)</name>
    <dbReference type="NCBI Taxonomy" id="99287"/>
    <lineage>
        <taxon>Bacteria</taxon>
        <taxon>Pseudomonadati</taxon>
        <taxon>Pseudomonadota</taxon>
        <taxon>Gammaproteobacteria</taxon>
        <taxon>Enterobacterales</taxon>
        <taxon>Enterobacteriaceae</taxon>
        <taxon>Salmonella</taxon>
    </lineage>
</organism>